<comment type="function">
    <text evidence="1">Necessary for normal cell division and for the maintenance of normal septation.</text>
</comment>
<comment type="cofactor">
    <cofactor evidence="1">
        <name>Mg(2+)</name>
        <dbReference type="ChEBI" id="CHEBI:18420"/>
    </cofactor>
</comment>
<comment type="similarity">
    <text evidence="1">Belongs to the TRAFAC class TrmE-Era-EngA-EngB-Septin-like GTPase superfamily. EngB GTPase family.</text>
</comment>
<name>ENGB_STRZT</name>
<dbReference type="EMBL" id="CP000921">
    <property type="protein sequence ID" value="ACO22839.1"/>
    <property type="molecule type" value="Genomic_DNA"/>
</dbReference>
<dbReference type="SMR" id="C1CSI8"/>
<dbReference type="KEGG" id="snt:SPT_1508"/>
<dbReference type="HOGENOM" id="CLU_033732_3_0_9"/>
<dbReference type="GO" id="GO:0005829">
    <property type="term" value="C:cytosol"/>
    <property type="evidence" value="ECO:0007669"/>
    <property type="project" value="TreeGrafter"/>
</dbReference>
<dbReference type="GO" id="GO:0005525">
    <property type="term" value="F:GTP binding"/>
    <property type="evidence" value="ECO:0007669"/>
    <property type="project" value="UniProtKB-UniRule"/>
</dbReference>
<dbReference type="GO" id="GO:0046872">
    <property type="term" value="F:metal ion binding"/>
    <property type="evidence" value="ECO:0007669"/>
    <property type="project" value="UniProtKB-KW"/>
</dbReference>
<dbReference type="GO" id="GO:0000917">
    <property type="term" value="P:division septum assembly"/>
    <property type="evidence" value="ECO:0007669"/>
    <property type="project" value="UniProtKB-KW"/>
</dbReference>
<dbReference type="CDD" id="cd01876">
    <property type="entry name" value="YihA_EngB"/>
    <property type="match status" value="1"/>
</dbReference>
<dbReference type="FunFam" id="3.40.50.300:FF:000098">
    <property type="entry name" value="Probable GTP-binding protein EngB"/>
    <property type="match status" value="1"/>
</dbReference>
<dbReference type="Gene3D" id="3.40.50.300">
    <property type="entry name" value="P-loop containing nucleotide triphosphate hydrolases"/>
    <property type="match status" value="1"/>
</dbReference>
<dbReference type="HAMAP" id="MF_00321">
    <property type="entry name" value="GTPase_EngB"/>
    <property type="match status" value="1"/>
</dbReference>
<dbReference type="InterPro" id="IPR030393">
    <property type="entry name" value="G_ENGB_dom"/>
</dbReference>
<dbReference type="InterPro" id="IPR006073">
    <property type="entry name" value="GTP-bd"/>
</dbReference>
<dbReference type="InterPro" id="IPR019987">
    <property type="entry name" value="GTP-bd_ribosome_bio_YsxC"/>
</dbReference>
<dbReference type="InterPro" id="IPR027417">
    <property type="entry name" value="P-loop_NTPase"/>
</dbReference>
<dbReference type="NCBIfam" id="TIGR03598">
    <property type="entry name" value="GTPase_YsxC"/>
    <property type="match status" value="1"/>
</dbReference>
<dbReference type="PANTHER" id="PTHR11649:SF13">
    <property type="entry name" value="ENGB-TYPE G DOMAIN-CONTAINING PROTEIN"/>
    <property type="match status" value="1"/>
</dbReference>
<dbReference type="PANTHER" id="PTHR11649">
    <property type="entry name" value="MSS1/TRME-RELATED GTP-BINDING PROTEIN"/>
    <property type="match status" value="1"/>
</dbReference>
<dbReference type="Pfam" id="PF01926">
    <property type="entry name" value="MMR_HSR1"/>
    <property type="match status" value="1"/>
</dbReference>
<dbReference type="PRINTS" id="PR00449">
    <property type="entry name" value="RASTRNSFRMNG"/>
</dbReference>
<dbReference type="SUPFAM" id="SSF52540">
    <property type="entry name" value="P-loop containing nucleoside triphosphate hydrolases"/>
    <property type="match status" value="1"/>
</dbReference>
<dbReference type="PROSITE" id="PS51706">
    <property type="entry name" value="G_ENGB"/>
    <property type="match status" value="1"/>
</dbReference>
<keyword id="KW-0131">Cell cycle</keyword>
<keyword id="KW-0132">Cell division</keyword>
<keyword id="KW-0342">GTP-binding</keyword>
<keyword id="KW-0460">Magnesium</keyword>
<keyword id="KW-0479">Metal-binding</keyword>
<keyword id="KW-0547">Nucleotide-binding</keyword>
<keyword id="KW-0717">Septation</keyword>
<gene>
    <name evidence="1" type="primary">engB</name>
    <name type="ordered locus">SPT_1508</name>
</gene>
<evidence type="ECO:0000255" key="1">
    <source>
        <dbReference type="HAMAP-Rule" id="MF_00321"/>
    </source>
</evidence>
<reference key="1">
    <citation type="journal article" date="2010" name="Genome Biol.">
        <title>Structure and dynamics of the pan-genome of Streptococcus pneumoniae and closely related species.</title>
        <authorList>
            <person name="Donati C."/>
            <person name="Hiller N.L."/>
            <person name="Tettelin H."/>
            <person name="Muzzi A."/>
            <person name="Croucher N.J."/>
            <person name="Angiuoli S.V."/>
            <person name="Oggioni M."/>
            <person name="Dunning Hotopp J.C."/>
            <person name="Hu F.Z."/>
            <person name="Riley D.R."/>
            <person name="Covacci A."/>
            <person name="Mitchell T.J."/>
            <person name="Bentley S.D."/>
            <person name="Kilian M."/>
            <person name="Ehrlich G.D."/>
            <person name="Rappuoli R."/>
            <person name="Moxon E.R."/>
            <person name="Masignani V."/>
        </authorList>
    </citation>
    <scope>NUCLEOTIDE SEQUENCE [LARGE SCALE GENOMIC DNA]</scope>
    <source>
        <strain>Taiwan19F-14</strain>
    </source>
</reference>
<organism>
    <name type="scientific">Streptococcus pneumoniae (strain Taiwan19F-14)</name>
    <dbReference type="NCBI Taxonomy" id="487213"/>
    <lineage>
        <taxon>Bacteria</taxon>
        <taxon>Bacillati</taxon>
        <taxon>Bacillota</taxon>
        <taxon>Bacilli</taxon>
        <taxon>Lactobacillales</taxon>
        <taxon>Streptococcaceae</taxon>
        <taxon>Streptococcus</taxon>
    </lineage>
</organism>
<protein>
    <recommendedName>
        <fullName evidence="1">Probable GTP-binding protein EngB</fullName>
    </recommendedName>
</protein>
<sequence length="195" mass="22327">MELNTHNAEILLSAANKSHYPQDELPEIALAGRSNVGKSSFINTMLNRKNLARTSGKPGKTQLLNFFNIDDKMRFVDVPGYGYARVSKKEREKWGRMIEEYLTTRENLRAVVSLVDLRHDPSADDVQMYEFLKYYEIPVIIVATKADKIPRGKWNKHESAIKKKLNFDPSDDFILFSSVSKAGMDEAWDAILEKL</sequence>
<accession>C1CSI8</accession>
<feature type="chain" id="PRO_1000189940" description="Probable GTP-binding protein EngB">
    <location>
        <begin position="1"/>
        <end position="195"/>
    </location>
</feature>
<feature type="domain" description="EngB-type G" evidence="1">
    <location>
        <begin position="24"/>
        <end position="195"/>
    </location>
</feature>
<feature type="binding site" evidence="1">
    <location>
        <begin position="32"/>
        <end position="39"/>
    </location>
    <ligand>
        <name>GTP</name>
        <dbReference type="ChEBI" id="CHEBI:37565"/>
    </ligand>
</feature>
<feature type="binding site" evidence="1">
    <location>
        <position position="39"/>
    </location>
    <ligand>
        <name>Mg(2+)</name>
        <dbReference type="ChEBI" id="CHEBI:18420"/>
    </ligand>
</feature>
<feature type="binding site" evidence="1">
    <location>
        <begin position="59"/>
        <end position="63"/>
    </location>
    <ligand>
        <name>GTP</name>
        <dbReference type="ChEBI" id="CHEBI:37565"/>
    </ligand>
</feature>
<feature type="binding site" evidence="1">
    <location>
        <position position="61"/>
    </location>
    <ligand>
        <name>Mg(2+)</name>
        <dbReference type="ChEBI" id="CHEBI:18420"/>
    </ligand>
</feature>
<feature type="binding site" evidence="1">
    <location>
        <begin position="77"/>
        <end position="80"/>
    </location>
    <ligand>
        <name>GTP</name>
        <dbReference type="ChEBI" id="CHEBI:37565"/>
    </ligand>
</feature>
<feature type="binding site" evidence="1">
    <location>
        <begin position="144"/>
        <end position="147"/>
    </location>
    <ligand>
        <name>GTP</name>
        <dbReference type="ChEBI" id="CHEBI:37565"/>
    </ligand>
</feature>
<feature type="binding site" evidence="1">
    <location>
        <begin position="176"/>
        <end position="178"/>
    </location>
    <ligand>
        <name>GTP</name>
        <dbReference type="ChEBI" id="CHEBI:37565"/>
    </ligand>
</feature>
<proteinExistence type="inferred from homology"/>